<dbReference type="EMBL" id="AF288403">
    <property type="protein sequence ID" value="AAG28743.1"/>
    <property type="molecule type" value="Genomic_DNA"/>
</dbReference>
<dbReference type="EMBL" id="BC059823">
    <property type="protein sequence ID" value="AAH59823.1"/>
    <property type="molecule type" value="mRNA"/>
</dbReference>
<dbReference type="CCDS" id="CCDS22559.1"/>
<dbReference type="RefSeq" id="NP_077787.3">
    <property type="nucleotide sequence ID" value="NM_024467.3"/>
</dbReference>
<dbReference type="SMR" id="Q9ERR8"/>
<dbReference type="FunCoup" id="Q9ERR8">
    <property type="interactions" value="1012"/>
</dbReference>
<dbReference type="STRING" id="10090.ENSMUSP00000053397"/>
<dbReference type="iPTMnet" id="Q9ERR8"/>
<dbReference type="PhosphoSitePlus" id="Q9ERR8"/>
<dbReference type="PaxDb" id="10090-ENSMUSP00000053397"/>
<dbReference type="ProteomicsDB" id="299575"/>
<dbReference type="Antibodypedia" id="29030">
    <property type="antibodies" value="99 antibodies from 19 providers"/>
</dbReference>
<dbReference type="DNASU" id="79233"/>
<dbReference type="Ensembl" id="ENSMUST00000057717.8">
    <property type="protein sequence ID" value="ENSMUSP00000053397.7"/>
    <property type="gene ID" value="ENSMUSG00000046556.8"/>
</dbReference>
<dbReference type="GeneID" id="79233"/>
<dbReference type="KEGG" id="mmu:79233"/>
<dbReference type="UCSC" id="uc009myf.1">
    <property type="organism name" value="mouse"/>
</dbReference>
<dbReference type="AGR" id="MGI:1890618"/>
<dbReference type="CTD" id="79233"/>
<dbReference type="MGI" id="MGI:1890618">
    <property type="gene designation" value="Zfp319"/>
</dbReference>
<dbReference type="VEuPathDB" id="HostDB:ENSMUSG00000046556"/>
<dbReference type="eggNOG" id="KOG1721">
    <property type="taxonomic scope" value="Eukaryota"/>
</dbReference>
<dbReference type="GeneTree" id="ENSGT00940000160309"/>
<dbReference type="HOGENOM" id="CLU_002678_44_5_1"/>
<dbReference type="InParanoid" id="Q9ERR8"/>
<dbReference type="OMA" id="QHHSAHT"/>
<dbReference type="OrthoDB" id="8895262at2759"/>
<dbReference type="PhylomeDB" id="Q9ERR8"/>
<dbReference type="TreeFam" id="TF332615"/>
<dbReference type="BioGRID-ORCS" id="79233">
    <property type="hits" value="3 hits in 77 CRISPR screens"/>
</dbReference>
<dbReference type="ChiTaRS" id="Zfp319">
    <property type="organism name" value="mouse"/>
</dbReference>
<dbReference type="PRO" id="PR:Q9ERR8"/>
<dbReference type="Proteomes" id="UP000000589">
    <property type="component" value="Chromosome 8"/>
</dbReference>
<dbReference type="RNAct" id="Q9ERR8">
    <property type="molecule type" value="protein"/>
</dbReference>
<dbReference type="Bgee" id="ENSMUSG00000046556">
    <property type="expression patterns" value="Expressed in rostral migratory stream and 225 other cell types or tissues"/>
</dbReference>
<dbReference type="GO" id="GO:0005634">
    <property type="term" value="C:nucleus"/>
    <property type="evidence" value="ECO:0000314"/>
    <property type="project" value="MGI"/>
</dbReference>
<dbReference type="GO" id="GO:0003677">
    <property type="term" value="F:DNA binding"/>
    <property type="evidence" value="ECO:0007669"/>
    <property type="project" value="UniProtKB-KW"/>
</dbReference>
<dbReference type="GO" id="GO:0008270">
    <property type="term" value="F:zinc ion binding"/>
    <property type="evidence" value="ECO:0007669"/>
    <property type="project" value="UniProtKB-KW"/>
</dbReference>
<dbReference type="FunFam" id="3.30.160.60:FF:000446">
    <property type="entry name" value="Zinc finger protein"/>
    <property type="match status" value="1"/>
</dbReference>
<dbReference type="FunFam" id="3.30.160.60:FF:000870">
    <property type="entry name" value="zinc finger protein 197 isoform X1"/>
    <property type="match status" value="1"/>
</dbReference>
<dbReference type="FunFam" id="3.30.160.60:FF:001233">
    <property type="entry name" value="Zinc finger protein 319"/>
    <property type="match status" value="1"/>
</dbReference>
<dbReference type="FunFam" id="3.30.160.60:FF:000185">
    <property type="entry name" value="zinc finger protein 319"/>
    <property type="match status" value="1"/>
</dbReference>
<dbReference type="FunFam" id="3.30.160.60:FF:001049">
    <property type="entry name" value="zinc finger protein 319"/>
    <property type="match status" value="1"/>
</dbReference>
<dbReference type="FunFam" id="3.30.160.60:FF:001217">
    <property type="entry name" value="zinc finger protein 319"/>
    <property type="match status" value="1"/>
</dbReference>
<dbReference type="FunFam" id="3.30.160.60:FF:000690">
    <property type="entry name" value="Zinc finger protein 354C"/>
    <property type="match status" value="1"/>
</dbReference>
<dbReference type="FunFam" id="3.30.160.60:FF:001270">
    <property type="entry name" value="zinc finger protein 583 isoform X1"/>
    <property type="match status" value="1"/>
</dbReference>
<dbReference type="FunFam" id="3.30.160.60:FF:001238">
    <property type="entry name" value="Zinc finger protein 648"/>
    <property type="match status" value="1"/>
</dbReference>
<dbReference type="FunFam" id="3.30.160.60:FF:001134">
    <property type="entry name" value="Zinc finger protein 70"/>
    <property type="match status" value="1"/>
</dbReference>
<dbReference type="Gene3D" id="3.30.160.60">
    <property type="entry name" value="Classic Zinc Finger"/>
    <property type="match status" value="11"/>
</dbReference>
<dbReference type="InterPro" id="IPR036236">
    <property type="entry name" value="Znf_C2H2_sf"/>
</dbReference>
<dbReference type="InterPro" id="IPR013087">
    <property type="entry name" value="Znf_C2H2_type"/>
</dbReference>
<dbReference type="PANTHER" id="PTHR24408">
    <property type="entry name" value="ZINC FINGER PROTEIN"/>
    <property type="match status" value="1"/>
</dbReference>
<dbReference type="PANTHER" id="PTHR24408:SF34">
    <property type="entry name" value="ZINC FINGER PROTEIN 672-RELATED"/>
    <property type="match status" value="1"/>
</dbReference>
<dbReference type="Pfam" id="PF00096">
    <property type="entry name" value="zf-C2H2"/>
    <property type="match status" value="6"/>
</dbReference>
<dbReference type="Pfam" id="PF13465">
    <property type="entry name" value="zf-H2C2_2"/>
    <property type="match status" value="2"/>
</dbReference>
<dbReference type="SMART" id="SM00355">
    <property type="entry name" value="ZnF_C2H2"/>
    <property type="match status" value="14"/>
</dbReference>
<dbReference type="SUPFAM" id="SSF57667">
    <property type="entry name" value="beta-beta-alpha zinc fingers"/>
    <property type="match status" value="9"/>
</dbReference>
<dbReference type="PROSITE" id="PS00028">
    <property type="entry name" value="ZINC_FINGER_C2H2_1"/>
    <property type="match status" value="12"/>
</dbReference>
<dbReference type="PROSITE" id="PS50157">
    <property type="entry name" value="ZINC_FINGER_C2H2_2"/>
    <property type="match status" value="15"/>
</dbReference>
<comment type="function">
    <text>May be involved in transcriptional regulation.</text>
</comment>
<comment type="subcellular location">
    <subcellularLocation>
        <location evidence="4">Nucleus</location>
    </subcellularLocation>
</comment>
<comment type="similarity">
    <text evidence="4">Belongs to the krueppel C2H2-type zinc-finger protein family.</text>
</comment>
<gene>
    <name type="primary">Znf319</name>
    <name type="synonym">Zfp319</name>
</gene>
<feature type="chain" id="PRO_0000047528" description="Zinc finger protein 319">
    <location>
        <begin position="1"/>
        <end position="581"/>
    </location>
</feature>
<feature type="zinc finger region" description="C2H2-type 1" evidence="2">
    <location>
        <begin position="75"/>
        <end position="99"/>
    </location>
</feature>
<feature type="zinc finger region" description="C2H2-type 2; degenerate" evidence="2">
    <location>
        <begin position="103"/>
        <end position="125"/>
    </location>
</feature>
<feature type="zinc finger region" description="C2H2-type 3" evidence="2">
    <location>
        <begin position="131"/>
        <end position="153"/>
    </location>
</feature>
<feature type="zinc finger region" description="C2H2-type 4" evidence="2">
    <location>
        <begin position="201"/>
        <end position="223"/>
    </location>
</feature>
<feature type="zinc finger region" description="C2H2-type 5" evidence="2">
    <location>
        <begin position="229"/>
        <end position="251"/>
    </location>
</feature>
<feature type="zinc finger region" description="C2H2-type 6" evidence="2">
    <location>
        <begin position="257"/>
        <end position="279"/>
    </location>
</feature>
<feature type="zinc finger region" description="C2H2-type 7; degenerate" evidence="2">
    <location>
        <begin position="286"/>
        <end position="308"/>
    </location>
</feature>
<feature type="zinc finger region" description="C2H2-type 8" evidence="2">
    <location>
        <begin position="314"/>
        <end position="336"/>
    </location>
</feature>
<feature type="zinc finger region" description="C2H2-type 9" evidence="2">
    <location>
        <begin position="342"/>
        <end position="364"/>
    </location>
</feature>
<feature type="zinc finger region" description="C2H2-type 10" evidence="2">
    <location>
        <begin position="370"/>
        <end position="392"/>
    </location>
</feature>
<feature type="zinc finger region" description="C2H2-type 11; degenerate" evidence="2">
    <location>
        <begin position="398"/>
        <end position="420"/>
    </location>
</feature>
<feature type="zinc finger region" description="C2H2-type 12" evidence="2">
    <location>
        <begin position="427"/>
        <end position="449"/>
    </location>
</feature>
<feature type="zinc finger region" description="C2H2-type 13; degenerate" evidence="2">
    <location>
        <begin position="457"/>
        <end position="479"/>
    </location>
</feature>
<feature type="zinc finger region" description="C2H2-type 14" evidence="2">
    <location>
        <begin position="485"/>
        <end position="507"/>
    </location>
</feature>
<feature type="zinc finger region" description="C2H2-type 15" evidence="2">
    <location>
        <begin position="513"/>
        <end position="535"/>
    </location>
</feature>
<feature type="zinc finger region" description="C2H2-type 16" evidence="2">
    <location>
        <begin position="541"/>
        <end position="563"/>
    </location>
</feature>
<feature type="region of interest" description="Disordered" evidence="3">
    <location>
        <begin position="1"/>
        <end position="39"/>
    </location>
</feature>
<feature type="compositionally biased region" description="Low complexity" evidence="3">
    <location>
        <begin position="1"/>
        <end position="22"/>
    </location>
</feature>
<feature type="modified residue" description="Phosphoserine" evidence="1">
    <location>
        <position position="280"/>
    </location>
</feature>
<feature type="cross-link" description="Glycyl lysine isopeptide (Lys-Gly) (interchain with G-Cter in SUMO2)" evidence="1">
    <location>
        <position position="129"/>
    </location>
</feature>
<protein>
    <recommendedName>
        <fullName>Zinc finger protein 319</fullName>
    </recommendedName>
</protein>
<reference key="1">
    <citation type="journal article" date="2000" name="Genomics">
        <title>Overexpression of a novel zinc-finger protein induces apoptosis in NIH3T3 fibroblasts.</title>
        <authorList>
            <person name="Laub F."/>
            <person name="Aldabe R."/>
            <person name="Ou J."/>
            <person name="Ramirez F."/>
        </authorList>
    </citation>
    <scope>NUCLEOTIDE SEQUENCE [GENOMIC DNA]</scope>
</reference>
<reference key="2">
    <citation type="journal article" date="2004" name="Genome Res.">
        <title>The status, quality, and expansion of the NIH full-length cDNA project: the Mammalian Gene Collection (MGC).</title>
        <authorList>
            <consortium name="The MGC Project Team"/>
        </authorList>
    </citation>
    <scope>NUCLEOTIDE SEQUENCE [LARGE SCALE MRNA]</scope>
    <source>
        <strain>C57BL/6J</strain>
        <tissue>Brain</tissue>
    </source>
</reference>
<accession>Q9ERR8</accession>
<name>ZN319_MOUSE</name>
<proteinExistence type="evidence at transcript level"/>
<organism>
    <name type="scientific">Mus musculus</name>
    <name type="common">Mouse</name>
    <dbReference type="NCBI Taxonomy" id="10090"/>
    <lineage>
        <taxon>Eukaryota</taxon>
        <taxon>Metazoa</taxon>
        <taxon>Chordata</taxon>
        <taxon>Craniata</taxon>
        <taxon>Vertebrata</taxon>
        <taxon>Euteleostomi</taxon>
        <taxon>Mammalia</taxon>
        <taxon>Eutheria</taxon>
        <taxon>Euarchontoglires</taxon>
        <taxon>Glires</taxon>
        <taxon>Rodentia</taxon>
        <taxon>Myomorpha</taxon>
        <taxon>Muroidea</taxon>
        <taxon>Muridae</taxon>
        <taxon>Murinae</taxon>
        <taxon>Mus</taxon>
        <taxon>Mus</taxon>
    </lineage>
</organism>
<sequence length="581" mass="65644">MSESWQQPPQTQPQQPQAPQPQHHAETPPALAEHTLPPGSAENPLGCAVYGILLQPDPGLQPPQHAPLQAGEPGPKCGVCGHDLAHLSSPHEHQCLAGHDRSFQCTQCLKIFHQATDLLEHQCVQAEQKPFVCGVCKMGFSLLTSLAQHHSSHTGMVKCSICDKTYKPAEAAEPATTTAPSLPSAPPPANIAPVEQPEKPYSCPVCQKPFKHLSELSRHERIHTGEKPYKCTLCDKSFSQSSHLVHHKRTHSSERPYKCAVCEKTFKHRSHLVRHMYAHSGEHHLFRCNVCELHFKESSELLQHPCTPSGERPFRCGECQKAFKRPSDLRQHERTHSAERPFKCDLCPMGFKQQYALMRHRRTHKTEEPFKCGLCEKGFGQPSHLLYHQHVHTLETLFKCPVCQKGFDQSAELLRHKCLPTSTERPFKCPVCNKAYKRASALQKHQLSHCAAAEKPLRCTLCERRFFSSSEFVQHRCDPAREKPLKCPDCEKRFKYASDLQRHRRVHTGEKPYKCPSCDKAFKQREHLNKHQGVHAREQQFKCVWCGERFLDVALLQEHSAQHSAAAAAAEGAYQVAACLP</sequence>
<keyword id="KW-0238">DNA-binding</keyword>
<keyword id="KW-1017">Isopeptide bond</keyword>
<keyword id="KW-0479">Metal-binding</keyword>
<keyword id="KW-0539">Nucleus</keyword>
<keyword id="KW-0597">Phosphoprotein</keyword>
<keyword id="KW-1185">Reference proteome</keyword>
<keyword id="KW-0677">Repeat</keyword>
<keyword id="KW-0804">Transcription</keyword>
<keyword id="KW-0805">Transcription regulation</keyword>
<keyword id="KW-0832">Ubl conjugation</keyword>
<keyword id="KW-0862">Zinc</keyword>
<keyword id="KW-0863">Zinc-finger</keyword>
<evidence type="ECO:0000250" key="1">
    <source>
        <dbReference type="UniProtKB" id="Q9P2F9"/>
    </source>
</evidence>
<evidence type="ECO:0000255" key="2">
    <source>
        <dbReference type="PROSITE-ProRule" id="PRU00042"/>
    </source>
</evidence>
<evidence type="ECO:0000256" key="3">
    <source>
        <dbReference type="SAM" id="MobiDB-lite"/>
    </source>
</evidence>
<evidence type="ECO:0000305" key="4"/>